<feature type="chain" id="PRO_1000141421" description="Large ribosomal subunit protein uL1">
    <location>
        <begin position="1"/>
        <end position="230"/>
    </location>
</feature>
<reference key="1">
    <citation type="journal article" date="2008" name="PLoS ONE">
        <title>Genome sequence of the saprophyte Leptospira biflexa provides insights into the evolution of Leptospira and the pathogenesis of leptospirosis.</title>
        <authorList>
            <person name="Picardeau M."/>
            <person name="Bulach D.M."/>
            <person name="Bouchier C."/>
            <person name="Zuerner R.L."/>
            <person name="Zidane N."/>
            <person name="Wilson P.J."/>
            <person name="Creno S."/>
            <person name="Kuczek E.S."/>
            <person name="Bommezzadri S."/>
            <person name="Davis J.C."/>
            <person name="McGrath A."/>
            <person name="Johnson M.J."/>
            <person name="Boursaux-Eude C."/>
            <person name="Seemann T."/>
            <person name="Rouy Z."/>
            <person name="Coppel R.L."/>
            <person name="Rood J.I."/>
            <person name="Lajus A."/>
            <person name="Davies J.K."/>
            <person name="Medigue C."/>
            <person name="Adler B."/>
        </authorList>
    </citation>
    <scope>NUCLEOTIDE SEQUENCE [LARGE SCALE GENOMIC DNA]</scope>
    <source>
        <strain>Patoc 1 / Ames</strain>
    </source>
</reference>
<keyword id="KW-0678">Repressor</keyword>
<keyword id="KW-0687">Ribonucleoprotein</keyword>
<keyword id="KW-0689">Ribosomal protein</keyword>
<keyword id="KW-0694">RNA-binding</keyword>
<keyword id="KW-0699">rRNA-binding</keyword>
<keyword id="KW-0810">Translation regulation</keyword>
<keyword id="KW-0820">tRNA-binding</keyword>
<name>RL1_LEPBA</name>
<protein>
    <recommendedName>
        <fullName evidence="1">Large ribosomal subunit protein uL1</fullName>
    </recommendedName>
    <alternativeName>
        <fullName evidence="2">50S ribosomal protein L1</fullName>
    </alternativeName>
</protein>
<proteinExistence type="inferred from homology"/>
<comment type="function">
    <text evidence="1">Binds directly to 23S rRNA. The L1 stalk is quite mobile in the ribosome, and is involved in E site tRNA release.</text>
</comment>
<comment type="function">
    <text evidence="1">Protein L1 is also a translational repressor protein, it controls the translation of the L11 operon by binding to its mRNA.</text>
</comment>
<comment type="subunit">
    <text evidence="1">Part of the 50S ribosomal subunit.</text>
</comment>
<comment type="similarity">
    <text evidence="1">Belongs to the universal ribosomal protein uL1 family.</text>
</comment>
<organism>
    <name type="scientific">Leptospira biflexa serovar Patoc (strain Patoc 1 / Ames)</name>
    <dbReference type="NCBI Taxonomy" id="355278"/>
    <lineage>
        <taxon>Bacteria</taxon>
        <taxon>Pseudomonadati</taxon>
        <taxon>Spirochaetota</taxon>
        <taxon>Spirochaetia</taxon>
        <taxon>Leptospirales</taxon>
        <taxon>Leptospiraceae</taxon>
        <taxon>Leptospira</taxon>
    </lineage>
</organism>
<sequence length="230" mass="24649">MKRGKKYIQLKEKVDRTKAYTLGEAVGLAKATSYSKFDGTLEISTKINYKSLQNVRGTISLPHGTGKTIKVLVFCKGDKQNEAREAGADFVGDMDLIEKVSGGWTDFDACVATPDMMKEVGKLGPVLGRKGLMPKPKAGTVTTDVSKAVKELKAGRIEYRPDKGGVVHLGVGKCSFSDDKLSDNINAVVAALMKDKPSDAKGDYLKSFSVAATMGIGVKVDVKELVNANI</sequence>
<dbReference type="EMBL" id="CP000777">
    <property type="protein sequence ID" value="ABZ94427.1"/>
    <property type="molecule type" value="Genomic_DNA"/>
</dbReference>
<dbReference type="RefSeq" id="WP_012388948.1">
    <property type="nucleotide sequence ID" value="NC_010842.1"/>
</dbReference>
<dbReference type="SMR" id="B0SAG4"/>
<dbReference type="KEGG" id="lbf:LBF_1923"/>
<dbReference type="HOGENOM" id="CLU_062853_0_0_12"/>
<dbReference type="GO" id="GO:0015934">
    <property type="term" value="C:large ribosomal subunit"/>
    <property type="evidence" value="ECO:0007669"/>
    <property type="project" value="InterPro"/>
</dbReference>
<dbReference type="GO" id="GO:0019843">
    <property type="term" value="F:rRNA binding"/>
    <property type="evidence" value="ECO:0007669"/>
    <property type="project" value="UniProtKB-UniRule"/>
</dbReference>
<dbReference type="GO" id="GO:0003735">
    <property type="term" value="F:structural constituent of ribosome"/>
    <property type="evidence" value="ECO:0007669"/>
    <property type="project" value="InterPro"/>
</dbReference>
<dbReference type="GO" id="GO:0000049">
    <property type="term" value="F:tRNA binding"/>
    <property type="evidence" value="ECO:0007669"/>
    <property type="project" value="UniProtKB-KW"/>
</dbReference>
<dbReference type="GO" id="GO:0006417">
    <property type="term" value="P:regulation of translation"/>
    <property type="evidence" value="ECO:0007669"/>
    <property type="project" value="UniProtKB-KW"/>
</dbReference>
<dbReference type="GO" id="GO:0006412">
    <property type="term" value="P:translation"/>
    <property type="evidence" value="ECO:0007669"/>
    <property type="project" value="UniProtKB-UniRule"/>
</dbReference>
<dbReference type="CDD" id="cd00403">
    <property type="entry name" value="Ribosomal_L1"/>
    <property type="match status" value="1"/>
</dbReference>
<dbReference type="FunFam" id="3.40.50.790:FF:000001">
    <property type="entry name" value="50S ribosomal protein L1"/>
    <property type="match status" value="1"/>
</dbReference>
<dbReference type="Gene3D" id="3.30.190.20">
    <property type="match status" value="1"/>
</dbReference>
<dbReference type="Gene3D" id="3.40.50.790">
    <property type="match status" value="1"/>
</dbReference>
<dbReference type="HAMAP" id="MF_01318_B">
    <property type="entry name" value="Ribosomal_uL1_B"/>
    <property type="match status" value="1"/>
</dbReference>
<dbReference type="InterPro" id="IPR005878">
    <property type="entry name" value="Ribosom_uL1_bac-type"/>
</dbReference>
<dbReference type="InterPro" id="IPR002143">
    <property type="entry name" value="Ribosomal_uL1"/>
</dbReference>
<dbReference type="InterPro" id="IPR023674">
    <property type="entry name" value="Ribosomal_uL1-like"/>
</dbReference>
<dbReference type="InterPro" id="IPR028364">
    <property type="entry name" value="Ribosomal_uL1/biogenesis"/>
</dbReference>
<dbReference type="InterPro" id="IPR016095">
    <property type="entry name" value="Ribosomal_uL1_3-a/b-sand"/>
</dbReference>
<dbReference type="InterPro" id="IPR023673">
    <property type="entry name" value="Ribosomal_uL1_CS"/>
</dbReference>
<dbReference type="NCBIfam" id="TIGR01169">
    <property type="entry name" value="rplA_bact"/>
    <property type="match status" value="1"/>
</dbReference>
<dbReference type="PANTHER" id="PTHR36427">
    <property type="entry name" value="54S RIBOSOMAL PROTEIN L1, MITOCHONDRIAL"/>
    <property type="match status" value="1"/>
</dbReference>
<dbReference type="PANTHER" id="PTHR36427:SF3">
    <property type="entry name" value="LARGE RIBOSOMAL SUBUNIT PROTEIN UL1M"/>
    <property type="match status" value="1"/>
</dbReference>
<dbReference type="Pfam" id="PF00687">
    <property type="entry name" value="Ribosomal_L1"/>
    <property type="match status" value="1"/>
</dbReference>
<dbReference type="PIRSF" id="PIRSF002155">
    <property type="entry name" value="Ribosomal_L1"/>
    <property type="match status" value="1"/>
</dbReference>
<dbReference type="SUPFAM" id="SSF56808">
    <property type="entry name" value="Ribosomal protein L1"/>
    <property type="match status" value="1"/>
</dbReference>
<dbReference type="PROSITE" id="PS01199">
    <property type="entry name" value="RIBOSOMAL_L1"/>
    <property type="match status" value="1"/>
</dbReference>
<gene>
    <name evidence="1" type="primary">rplA</name>
    <name type="ordered locus">LBF_1923</name>
</gene>
<accession>B0SAG4</accession>
<evidence type="ECO:0000255" key="1">
    <source>
        <dbReference type="HAMAP-Rule" id="MF_01318"/>
    </source>
</evidence>
<evidence type="ECO:0000305" key="2"/>